<sequence length="290" mass="33833">MDIEAYFERIGYQNSRNKLDLQTLTEILQHQIRAIPFENLNIHCGESMELSLETIFDQIVRKKRGGWCLQVNHLLYWALTKMGFETTMLGGYVFNTPANKYSSGMIHLLVQVTISDRNYIVDAGFGRSLQMWEPLELVSGKDHPQVPAIFRLTEENETWYLDQIRREQYVPNQAFVNSDLLEKNKYRKIYSFTLEPRTIEDFESMNTYLQTSPASVFTSKSFCSLQTPEGVHCLVGCTLTYRRFSYKDNVDLVEFKSLKEEEIEDVLKTIFGISLEKKLVPKHGDRFFTI</sequence>
<feature type="chain" id="PRO_0000107907" description="Arylamine N-acetyltransferase 2">
    <location>
        <begin position="1"/>
        <end position="290"/>
    </location>
</feature>
<feature type="active site" description="Acyl-thioester intermediate" evidence="1">
    <location>
        <position position="68"/>
    </location>
</feature>
<feature type="active site" evidence="1">
    <location>
        <position position="107"/>
    </location>
</feature>
<feature type="active site" evidence="1">
    <location>
        <position position="122"/>
    </location>
</feature>
<feature type="binding site" evidence="1">
    <location>
        <position position="103"/>
    </location>
    <ligand>
        <name>CoA</name>
        <dbReference type="ChEBI" id="CHEBI:57287"/>
    </ligand>
</feature>
<feature type="binding site" evidence="1">
    <location>
        <position position="104"/>
    </location>
    <ligand>
        <name>CoA</name>
        <dbReference type="ChEBI" id="CHEBI:57287"/>
    </ligand>
</feature>
<feature type="binding site" evidence="1">
    <location>
        <begin position="106"/>
        <end position="107"/>
    </location>
    <ligand>
        <name>substrate</name>
    </ligand>
</feature>
<feature type="binding site" evidence="1">
    <location>
        <position position="208"/>
    </location>
    <ligand>
        <name>CoA</name>
        <dbReference type="ChEBI" id="CHEBI:57287"/>
    </ligand>
</feature>
<feature type="sequence variant" description="In slow isoform.">
    <location>
        <begin position="243"/>
        <end position="290"/>
    </location>
</feature>
<comment type="function">
    <text evidence="2">Catalyzes the N- or O-acetylation of various arylamine and heterocyclic amine substrates, and participates in the detoxification of a plethora of hydrazine and arylamine drugs.</text>
</comment>
<comment type="catalytic activity">
    <reaction evidence="2">
        <text>an arylamine + acetyl-CoA = an N-acetylarylamine + CoA</text>
        <dbReference type="Rhea" id="RHEA:16613"/>
        <dbReference type="ChEBI" id="CHEBI:13790"/>
        <dbReference type="ChEBI" id="CHEBI:50471"/>
        <dbReference type="ChEBI" id="CHEBI:57287"/>
        <dbReference type="ChEBI" id="CHEBI:57288"/>
        <dbReference type="EC" id="2.3.1.5"/>
    </reaction>
</comment>
<comment type="catalytic activity">
    <reaction evidence="2">
        <text>an N-hydroxyarylamine + acetyl-CoA = an N-acetoxyarylamine + CoA</text>
        <dbReference type="Rhea" id="RHEA:20277"/>
        <dbReference type="ChEBI" id="CHEBI:13792"/>
        <dbReference type="ChEBI" id="CHEBI:21494"/>
        <dbReference type="ChEBI" id="CHEBI:57287"/>
        <dbReference type="ChEBI" id="CHEBI:57288"/>
        <dbReference type="EC" id="2.3.1.118"/>
    </reaction>
</comment>
<comment type="subcellular location">
    <subcellularLocation>
        <location>Cytoplasm</location>
    </subcellularLocation>
</comment>
<comment type="polymorphism">
    <text evidence="3">There are two forms of NAT2: a rapid isoform and a slow isoform.</text>
</comment>
<comment type="similarity">
    <text evidence="4">Belongs to the arylamine N-acetyltransferase family.</text>
</comment>
<gene>
    <name type="primary">NAT2</name>
    <name type="synonym">AAC2</name>
</gene>
<name>ARY2_MESAU</name>
<dbReference type="EC" id="2.3.1.5" evidence="2"/>
<dbReference type="EC" id="2.3.1.118" evidence="2"/>
<dbReference type="EMBL" id="U03468">
    <property type="protein sequence ID" value="AAB60524.1"/>
    <property type="molecule type" value="Genomic_DNA"/>
</dbReference>
<dbReference type="EMBL" id="U03467">
    <property type="protein sequence ID" value="AAB60523.1"/>
    <property type="molecule type" value="Genomic_DNA"/>
</dbReference>
<dbReference type="EMBL" id="L24912">
    <property type="protein sequence ID" value="AAA21829.1"/>
    <property type="molecule type" value="mRNA"/>
</dbReference>
<dbReference type="EMBL" id="S72005">
    <property type="protein sequence ID" value="AAB31917.1"/>
    <property type="molecule type" value="Genomic_DNA"/>
</dbReference>
<dbReference type="EMBL" id="S72007">
    <property type="protein sequence ID" value="AAB31918.1"/>
    <property type="molecule type" value="Genomic_DNA"/>
</dbReference>
<dbReference type="PIR" id="I78930">
    <property type="entry name" value="I78930"/>
</dbReference>
<dbReference type="PIR" id="I78931">
    <property type="entry name" value="I78931"/>
</dbReference>
<dbReference type="RefSeq" id="NP_001268752.1">
    <property type="nucleotide sequence ID" value="NM_001281823.1"/>
</dbReference>
<dbReference type="RefSeq" id="XP_012972609.1">
    <property type="nucleotide sequence ID" value="XM_013117155.1"/>
</dbReference>
<dbReference type="RefSeq" id="XP_012972610.1">
    <property type="nucleotide sequence ID" value="XM_013117156.1"/>
</dbReference>
<dbReference type="RefSeq" id="XP_012972611.1">
    <property type="nucleotide sequence ID" value="XM_013117157.1"/>
</dbReference>
<dbReference type="RefSeq" id="XP_012972612.1">
    <property type="nucleotide sequence ID" value="XM_013117158.1"/>
</dbReference>
<dbReference type="SMR" id="P50293"/>
<dbReference type="STRING" id="10036.ENSMAUP00000014047"/>
<dbReference type="BindingDB" id="P50293"/>
<dbReference type="ChEMBL" id="CHEMBL3259464"/>
<dbReference type="Ensembl" id="ENSMAUT00000017962">
    <property type="protein sequence ID" value="ENSMAUP00000014047"/>
    <property type="gene ID" value="ENSMAUG00000013927"/>
</dbReference>
<dbReference type="GeneID" id="101840555"/>
<dbReference type="KEGG" id="maua:101840555"/>
<dbReference type="CTD" id="10"/>
<dbReference type="eggNOG" id="ENOG502RD0D">
    <property type="taxonomic scope" value="Eukaryota"/>
</dbReference>
<dbReference type="OrthoDB" id="10260017at2759"/>
<dbReference type="BRENDA" id="2.3.1.5">
    <property type="organism ID" value="3239"/>
</dbReference>
<dbReference type="BRENDA" id="2.3.1.56">
    <property type="organism ID" value="3239"/>
</dbReference>
<dbReference type="Proteomes" id="UP000189706">
    <property type="component" value="Unplaced"/>
</dbReference>
<dbReference type="GO" id="GO:0005737">
    <property type="term" value="C:cytoplasm"/>
    <property type="evidence" value="ECO:0007669"/>
    <property type="project" value="UniProtKB-SubCell"/>
</dbReference>
<dbReference type="GO" id="GO:0004060">
    <property type="term" value="F:arylamine N-acetyltransferase activity"/>
    <property type="evidence" value="ECO:0007669"/>
    <property type="project" value="UniProtKB-EC"/>
</dbReference>
<dbReference type="GO" id="GO:0046990">
    <property type="term" value="F:N-hydroxyarylamine O-acetyltransferase activity"/>
    <property type="evidence" value="ECO:0000250"/>
    <property type="project" value="UniProtKB"/>
</dbReference>
<dbReference type="FunFam" id="3.30.2140.20:FF:000001">
    <property type="entry name" value="Arylamine N-acetyltransferase 1"/>
    <property type="match status" value="1"/>
</dbReference>
<dbReference type="Gene3D" id="3.30.2140.20">
    <property type="match status" value="1"/>
</dbReference>
<dbReference type="InterPro" id="IPR001447">
    <property type="entry name" value="Arylamine_N-AcTrfase"/>
</dbReference>
<dbReference type="InterPro" id="IPR053710">
    <property type="entry name" value="Arylamine_NAT_domain_sf"/>
</dbReference>
<dbReference type="InterPro" id="IPR038765">
    <property type="entry name" value="Papain-like_cys_pep_sf"/>
</dbReference>
<dbReference type="PANTHER" id="PTHR11786:SF8">
    <property type="entry name" value="ARYLAMINE N-ACETYLTRANSFERASE 1"/>
    <property type="match status" value="1"/>
</dbReference>
<dbReference type="PANTHER" id="PTHR11786">
    <property type="entry name" value="N-HYDROXYARYLAMINE O-ACETYLTRANSFERASE"/>
    <property type="match status" value="1"/>
</dbReference>
<dbReference type="Pfam" id="PF00797">
    <property type="entry name" value="Acetyltransf_2"/>
    <property type="match status" value="1"/>
</dbReference>
<dbReference type="PRINTS" id="PR01543">
    <property type="entry name" value="ANATRNSFRASE"/>
</dbReference>
<dbReference type="SUPFAM" id="SSF54001">
    <property type="entry name" value="Cysteine proteinases"/>
    <property type="match status" value="1"/>
</dbReference>
<reference key="1">
    <citation type="journal article" date="1994" name="Gene">
        <title>Polymorphic arylamine N-acetyltransferase encoding gene (NAT2) from homozygous rapid and slow acetylator congenic Syrian hamsters.</title>
        <authorList>
            <person name="Ferguson R.J."/>
            <person name="Doll M.A."/>
            <person name="Baumstark B.R."/>
            <person name="Hein D.W."/>
        </authorList>
    </citation>
    <scope>NUCLEOTIDE SEQUENCE [GENOMIC DNA]</scope>
    <source>
        <tissue>Heart</tissue>
    </source>
</reference>
<reference key="2">
    <citation type="journal article" date="1994" name="Carcinogenesis">
        <title>Biochemical and genetic analysis of two acetyltransferases from hamster tissues that can metabolize aromatic amine derivatives.</title>
        <authorList>
            <person name="Land S.J."/>
            <person name="Jones R.F."/>
            <person name="King C.M."/>
        </authorList>
    </citation>
    <scope>NUCLEOTIDE SEQUENCE [GENOMIC DNA / MRNA]</scope>
    <source>
        <tissue>Liver</tissue>
    </source>
</reference>
<reference key="3">
    <citation type="journal article" date="1994" name="Pharmacogenetics">
        <title>Primary structure and molecular basis of polymorphic appearance of an acetyltransferase (AT-II)* in hamsters.</title>
        <authorList>
            <person name="Nagata K."/>
            <person name="Ozawa S."/>
            <person name="Miyata M."/>
            <person name="Shimada M."/>
            <person name="Yamazoe Y."/>
            <person name="Kato R."/>
        </authorList>
    </citation>
    <scope>NUCLEOTIDE SEQUENCE [GENOMIC DNA]</scope>
</reference>
<keyword id="KW-0012">Acyltransferase</keyword>
<keyword id="KW-0963">Cytoplasm</keyword>
<keyword id="KW-1185">Reference proteome</keyword>
<keyword id="KW-0808">Transferase</keyword>
<evidence type="ECO:0000250" key="1"/>
<evidence type="ECO:0000250" key="2">
    <source>
        <dbReference type="UniProtKB" id="P11245"/>
    </source>
</evidence>
<evidence type="ECO:0000269" key="3">
    <source>
    </source>
</evidence>
<evidence type="ECO:0000305" key="4"/>
<organism>
    <name type="scientific">Mesocricetus auratus</name>
    <name type="common">Golden hamster</name>
    <dbReference type="NCBI Taxonomy" id="10036"/>
    <lineage>
        <taxon>Eukaryota</taxon>
        <taxon>Metazoa</taxon>
        <taxon>Chordata</taxon>
        <taxon>Craniata</taxon>
        <taxon>Vertebrata</taxon>
        <taxon>Euteleostomi</taxon>
        <taxon>Mammalia</taxon>
        <taxon>Eutheria</taxon>
        <taxon>Euarchontoglires</taxon>
        <taxon>Glires</taxon>
        <taxon>Rodentia</taxon>
        <taxon>Myomorpha</taxon>
        <taxon>Muroidea</taxon>
        <taxon>Cricetidae</taxon>
        <taxon>Cricetinae</taxon>
        <taxon>Mesocricetus</taxon>
    </lineage>
</organism>
<accession>P50293</accession>
<protein>
    <recommendedName>
        <fullName>Arylamine N-acetyltransferase 2</fullName>
        <ecNumber evidence="2">2.3.1.5</ecNumber>
    </recommendedName>
    <alternativeName>
        <fullName>Arylamide acetylase 2</fullName>
    </alternativeName>
    <alternativeName>
        <fullName>N-acetyltransferase type 2</fullName>
        <shortName>AT-2</shortName>
        <shortName>NAT-2</shortName>
    </alternativeName>
    <alternativeName>
        <fullName>N-hydroxyarylamine O-acetyltransferase</fullName>
        <ecNumber evidence="2">2.3.1.118</ecNumber>
    </alternativeName>
    <alternativeName>
        <fullName>Polymorphic arylamine N-acetyltransferase</fullName>
        <shortName>PNAT</shortName>
    </alternativeName>
</protein>
<proteinExistence type="evidence at transcript level"/>